<keyword id="KW-0963">Cytoplasm</keyword>
<keyword id="KW-0488">Methylation</keyword>
<keyword id="KW-0648">Protein biosynthesis</keyword>
<keyword id="KW-1185">Reference proteome</keyword>
<name>RF1_LEGPH</name>
<feature type="chain" id="PRO_0000177688" description="Peptide chain release factor 1">
    <location>
        <begin position="1"/>
        <end position="362"/>
    </location>
</feature>
<feature type="modified residue" description="N5-methylglutamine" evidence="1">
    <location>
        <position position="237"/>
    </location>
</feature>
<reference key="1">
    <citation type="journal article" date="2004" name="Science">
        <title>The genomic sequence of the accidental pathogen Legionella pneumophila.</title>
        <authorList>
            <person name="Chien M."/>
            <person name="Morozova I."/>
            <person name="Shi S."/>
            <person name="Sheng H."/>
            <person name="Chen J."/>
            <person name="Gomez S.M."/>
            <person name="Asamani G."/>
            <person name="Hill K."/>
            <person name="Nuara J."/>
            <person name="Feder M."/>
            <person name="Rineer J."/>
            <person name="Greenberg J.J."/>
            <person name="Steshenko V."/>
            <person name="Park S.H."/>
            <person name="Zhao B."/>
            <person name="Teplitskaya E."/>
            <person name="Edwards J.R."/>
            <person name="Pampou S."/>
            <person name="Georghiou A."/>
            <person name="Chou I.-C."/>
            <person name="Iannuccilli W."/>
            <person name="Ulz M.E."/>
            <person name="Kim D.H."/>
            <person name="Geringer-Sameth A."/>
            <person name="Goldsberry C."/>
            <person name="Morozov P."/>
            <person name="Fischer S.G."/>
            <person name="Segal G."/>
            <person name="Qu X."/>
            <person name="Rzhetsky A."/>
            <person name="Zhang P."/>
            <person name="Cayanis E."/>
            <person name="De Jong P.J."/>
            <person name="Ju J."/>
            <person name="Kalachikov S."/>
            <person name="Shuman H.A."/>
            <person name="Russo J.J."/>
        </authorList>
    </citation>
    <scope>NUCLEOTIDE SEQUENCE [LARGE SCALE GENOMIC DNA]</scope>
    <source>
        <strain>Philadelphia 1 / ATCC 33152 / DSM 7513</strain>
    </source>
</reference>
<organism>
    <name type="scientific">Legionella pneumophila subsp. pneumophila (strain Philadelphia 1 / ATCC 33152 / DSM 7513)</name>
    <dbReference type="NCBI Taxonomy" id="272624"/>
    <lineage>
        <taxon>Bacteria</taxon>
        <taxon>Pseudomonadati</taxon>
        <taxon>Pseudomonadota</taxon>
        <taxon>Gammaproteobacteria</taxon>
        <taxon>Legionellales</taxon>
        <taxon>Legionellaceae</taxon>
        <taxon>Legionella</taxon>
    </lineage>
</organism>
<protein>
    <recommendedName>
        <fullName evidence="1">Peptide chain release factor 1</fullName>
        <shortName evidence="1">RF-1</shortName>
    </recommendedName>
</protein>
<proteinExistence type="inferred from homology"/>
<gene>
    <name evidence="1" type="primary">prfA</name>
    <name type="ordered locus">lpg2336</name>
</gene>
<comment type="function">
    <text evidence="1">Peptide chain release factor 1 directs the termination of translation in response to the peptide chain termination codons UAG and UAA.</text>
</comment>
<comment type="subcellular location">
    <subcellularLocation>
        <location evidence="1">Cytoplasm</location>
    </subcellularLocation>
</comment>
<comment type="PTM">
    <text evidence="1">Methylated by PrmC. Methylation increases the termination efficiency of RF1.</text>
</comment>
<comment type="similarity">
    <text evidence="1">Belongs to the prokaryotic/mitochondrial release factor family.</text>
</comment>
<dbReference type="EMBL" id="AE017354">
    <property type="protein sequence ID" value="AAU28398.1"/>
    <property type="molecule type" value="Genomic_DNA"/>
</dbReference>
<dbReference type="RefSeq" id="WP_010948042.1">
    <property type="nucleotide sequence ID" value="NC_002942.5"/>
</dbReference>
<dbReference type="RefSeq" id="YP_096345.1">
    <property type="nucleotide sequence ID" value="NC_002942.5"/>
</dbReference>
<dbReference type="SMR" id="Q5ZT29"/>
<dbReference type="STRING" id="272624.lpg2336"/>
<dbReference type="PaxDb" id="272624-lpg2336"/>
<dbReference type="GeneID" id="57036328"/>
<dbReference type="KEGG" id="lpn:lpg2336"/>
<dbReference type="PATRIC" id="fig|272624.6.peg.2454"/>
<dbReference type="eggNOG" id="COG0216">
    <property type="taxonomic scope" value="Bacteria"/>
</dbReference>
<dbReference type="HOGENOM" id="CLU_036856_0_1_6"/>
<dbReference type="OrthoDB" id="9806673at2"/>
<dbReference type="Proteomes" id="UP000000609">
    <property type="component" value="Chromosome"/>
</dbReference>
<dbReference type="GO" id="GO:0005737">
    <property type="term" value="C:cytoplasm"/>
    <property type="evidence" value="ECO:0007669"/>
    <property type="project" value="UniProtKB-SubCell"/>
</dbReference>
<dbReference type="GO" id="GO:0016149">
    <property type="term" value="F:translation release factor activity, codon specific"/>
    <property type="evidence" value="ECO:0007669"/>
    <property type="project" value="UniProtKB-UniRule"/>
</dbReference>
<dbReference type="FunFam" id="3.30.160.20:FF:000004">
    <property type="entry name" value="Peptide chain release factor 1"/>
    <property type="match status" value="1"/>
</dbReference>
<dbReference type="FunFam" id="3.30.70.1660:FF:000002">
    <property type="entry name" value="Peptide chain release factor 1"/>
    <property type="match status" value="1"/>
</dbReference>
<dbReference type="FunFam" id="3.30.70.1660:FF:000004">
    <property type="entry name" value="Peptide chain release factor 1"/>
    <property type="match status" value="1"/>
</dbReference>
<dbReference type="Gene3D" id="3.30.160.20">
    <property type="match status" value="1"/>
</dbReference>
<dbReference type="Gene3D" id="3.30.70.1660">
    <property type="match status" value="1"/>
</dbReference>
<dbReference type="Gene3D" id="6.10.140.1950">
    <property type="match status" value="1"/>
</dbReference>
<dbReference type="HAMAP" id="MF_00093">
    <property type="entry name" value="Rel_fac_1"/>
    <property type="match status" value="1"/>
</dbReference>
<dbReference type="InterPro" id="IPR005139">
    <property type="entry name" value="PCRF"/>
</dbReference>
<dbReference type="InterPro" id="IPR000352">
    <property type="entry name" value="Pep_chain_release_fac_I"/>
</dbReference>
<dbReference type="InterPro" id="IPR045853">
    <property type="entry name" value="Pep_chain_release_fac_I_sf"/>
</dbReference>
<dbReference type="InterPro" id="IPR050057">
    <property type="entry name" value="Prokaryotic/Mito_RF"/>
</dbReference>
<dbReference type="InterPro" id="IPR004373">
    <property type="entry name" value="RF-1"/>
</dbReference>
<dbReference type="NCBIfam" id="TIGR00019">
    <property type="entry name" value="prfA"/>
    <property type="match status" value="1"/>
</dbReference>
<dbReference type="NCBIfam" id="NF001859">
    <property type="entry name" value="PRK00591.1"/>
    <property type="match status" value="1"/>
</dbReference>
<dbReference type="PANTHER" id="PTHR43804">
    <property type="entry name" value="LD18447P"/>
    <property type="match status" value="1"/>
</dbReference>
<dbReference type="PANTHER" id="PTHR43804:SF7">
    <property type="entry name" value="LD18447P"/>
    <property type="match status" value="1"/>
</dbReference>
<dbReference type="Pfam" id="PF03462">
    <property type="entry name" value="PCRF"/>
    <property type="match status" value="1"/>
</dbReference>
<dbReference type="Pfam" id="PF00472">
    <property type="entry name" value="RF-1"/>
    <property type="match status" value="1"/>
</dbReference>
<dbReference type="SMART" id="SM00937">
    <property type="entry name" value="PCRF"/>
    <property type="match status" value="1"/>
</dbReference>
<dbReference type="SUPFAM" id="SSF75620">
    <property type="entry name" value="Release factor"/>
    <property type="match status" value="1"/>
</dbReference>
<dbReference type="PROSITE" id="PS00745">
    <property type="entry name" value="RF_PROK_I"/>
    <property type="match status" value="1"/>
</dbReference>
<sequence length="362" mass="41103">MKKSLELKLQQMLERYEEVGRLLSEASIIADQNQFKSLSKEYAQLEPVSQCYESYLEAKNNLDSLNELLESDDKDLATMAEEEIDTVKKQIEELDEQLQWHLIPKDPDDERNIYLEVRAGTGGDEAAIFAGDLFRMYSRYAESQGWQIELISASHGEHGGYKEIIAKISGQAVYSQLKFESGAHRVQRVPETESQGRVHTSACTVAIMPEVDEINDIQINPDDLRIDTYRSSGAGGQHVNKTDSAIRITHIPTGVVVECQDERSQHKNRAKAMSLLKTRLLDAEVSKQKQEQAQTRKSLVGTGDRSERIRTYNFPQGRLTDHRINLTIYQLSDIMEGNLSLVIDPLKREYHAELLADLGRHD</sequence>
<accession>Q5ZT29</accession>
<evidence type="ECO:0000255" key="1">
    <source>
        <dbReference type="HAMAP-Rule" id="MF_00093"/>
    </source>
</evidence>